<proteinExistence type="inferred from homology"/>
<feature type="chain" id="PRO_0000151059" description="UPF0284 protein TK0853">
    <location>
        <begin position="1"/>
        <end position="335"/>
    </location>
</feature>
<organism>
    <name type="scientific">Thermococcus kodakarensis (strain ATCC BAA-918 / JCM 12380 / KOD1)</name>
    <name type="common">Pyrococcus kodakaraensis (strain KOD1)</name>
    <dbReference type="NCBI Taxonomy" id="69014"/>
    <lineage>
        <taxon>Archaea</taxon>
        <taxon>Methanobacteriati</taxon>
        <taxon>Methanobacteriota</taxon>
        <taxon>Thermococci</taxon>
        <taxon>Thermococcales</taxon>
        <taxon>Thermococcaceae</taxon>
        <taxon>Thermococcus</taxon>
    </lineage>
</organism>
<name>Y853_THEKO</name>
<dbReference type="EMBL" id="AP006878">
    <property type="protein sequence ID" value="BAD85041.1"/>
    <property type="molecule type" value="Genomic_DNA"/>
</dbReference>
<dbReference type="RefSeq" id="WP_011249803.1">
    <property type="nucleotide sequence ID" value="NC_006624.1"/>
</dbReference>
<dbReference type="SMR" id="Q5JI02"/>
<dbReference type="STRING" id="69014.TK0853"/>
<dbReference type="EnsemblBacteria" id="BAD85041">
    <property type="protein sequence ID" value="BAD85041"/>
    <property type="gene ID" value="TK0853"/>
</dbReference>
<dbReference type="GeneID" id="78447367"/>
<dbReference type="KEGG" id="tko:TK0853"/>
<dbReference type="PATRIC" id="fig|69014.16.peg.831"/>
<dbReference type="eggNOG" id="arCOG04272">
    <property type="taxonomic scope" value="Archaea"/>
</dbReference>
<dbReference type="HOGENOM" id="CLU_053134_0_0_2"/>
<dbReference type="InParanoid" id="Q5JI02"/>
<dbReference type="PhylomeDB" id="Q5JI02"/>
<dbReference type="Proteomes" id="UP000000536">
    <property type="component" value="Chromosome"/>
</dbReference>
<dbReference type="GO" id="GO:0008939">
    <property type="term" value="F:nicotinate-nucleotide-dimethylbenzimidazole phosphoribosyltransferase activity"/>
    <property type="evidence" value="ECO:0007669"/>
    <property type="project" value="InterPro"/>
</dbReference>
<dbReference type="CDD" id="cd02439">
    <property type="entry name" value="DMB-PRT_CobT"/>
    <property type="match status" value="1"/>
</dbReference>
<dbReference type="Gene3D" id="3.40.50.10210">
    <property type="match status" value="1"/>
</dbReference>
<dbReference type="HAMAP" id="MF_01086">
    <property type="entry name" value="UPF0284"/>
    <property type="match status" value="1"/>
</dbReference>
<dbReference type="InterPro" id="IPR003200">
    <property type="entry name" value="Nict_dMeBzImd_PRibTrfase"/>
</dbReference>
<dbReference type="InterPro" id="IPR002805">
    <property type="entry name" value="Nict_dMeBzImd_PRibTrfase_arc"/>
</dbReference>
<dbReference type="InterPro" id="IPR036087">
    <property type="entry name" value="Nict_dMeBzImd_PRibTrfase_sf"/>
</dbReference>
<dbReference type="NCBIfam" id="TIGR00303">
    <property type="entry name" value="nicotinate mononucleotide-dependent phosphoribosyltransferase CobT"/>
    <property type="match status" value="1"/>
</dbReference>
<dbReference type="NCBIfam" id="NF003368">
    <property type="entry name" value="PRK04447.1-1"/>
    <property type="match status" value="1"/>
</dbReference>
<dbReference type="NCBIfam" id="NF003372">
    <property type="entry name" value="PRK04447.1-5"/>
    <property type="match status" value="1"/>
</dbReference>
<dbReference type="PANTHER" id="PTHR38811">
    <property type="match status" value="1"/>
</dbReference>
<dbReference type="PANTHER" id="PTHR38811:SF1">
    <property type="entry name" value="UPF0284 PROTEIN SLL1500"/>
    <property type="match status" value="1"/>
</dbReference>
<dbReference type="Pfam" id="PF02277">
    <property type="entry name" value="DBI_PRT"/>
    <property type="match status" value="1"/>
</dbReference>
<dbReference type="SUPFAM" id="SSF52733">
    <property type="entry name" value="Nicotinate mononucleotide:5,6-dimethylbenzimidazole phosphoribosyltransferase (CobT)"/>
    <property type="match status" value="1"/>
</dbReference>
<sequence length="335" mass="36264">MKSIFILVLGNTEVSLIPGISVAGATPELTKLTPPADAEYLFYEKPRIIDAIPVTPEGHPTPAIITKAARELANFPILVVRGGTYLAPLVPHVHISSAVGRDFRREPALPEFGEIVRMAKLLGEELNRTEIEELVIGESTPGGTTTAQAVLWAMGYDARTSSASPENPQSLKEQVIAEGFQRAGIERGQLKDNPLEALRQFGDPMMATVVGLALGFRKNVVLAGGTQMLAVSALLKALEEDMSRFMIATTKWVVRDKSATFIETAKEIGIITYAADLDFSKSEFKGLRDYENGYVKEGVGAGGATWLAIKAGFSPEEVSAKVEELYRRLMGMKSP</sequence>
<reference key="1">
    <citation type="journal article" date="2005" name="Genome Res.">
        <title>Complete genome sequence of the hyperthermophilic archaeon Thermococcus kodakaraensis KOD1 and comparison with Pyrococcus genomes.</title>
        <authorList>
            <person name="Fukui T."/>
            <person name="Atomi H."/>
            <person name="Kanai T."/>
            <person name="Matsumi R."/>
            <person name="Fujiwara S."/>
            <person name="Imanaka T."/>
        </authorList>
    </citation>
    <scope>NUCLEOTIDE SEQUENCE [LARGE SCALE GENOMIC DNA]</scope>
    <source>
        <strain>ATCC BAA-918 / JCM 12380 / KOD1</strain>
    </source>
</reference>
<evidence type="ECO:0000255" key="1">
    <source>
        <dbReference type="HAMAP-Rule" id="MF_01086"/>
    </source>
</evidence>
<comment type="similarity">
    <text evidence="1">Belongs to the UPF0284 family.</text>
</comment>
<keyword id="KW-1185">Reference proteome</keyword>
<accession>Q5JI02</accession>
<gene>
    <name type="ordered locus">TK0853</name>
</gene>
<protein>
    <recommendedName>
        <fullName evidence="1">UPF0284 protein TK0853</fullName>
    </recommendedName>
</protein>